<sequence length="139" mass="15839">MSPTTCTLRKHKTNRKPRTPFTTSQLLALERKFRQKQYLSIAERAEFSSSLNLTETQVKIWFQNRRAKAKRLQEAELEKLKMAAKPMLPSGFSLPFPINSPLQAASIYSASYPFHRPVLPIPPVGLYATPVGYGMYHLS</sequence>
<reference key="1">
    <citation type="journal article" date="1994" name="Mol. Endocrinol.">
        <title>Msx-2/Hox 8.1: a transcriptional regulator of the rat osteocalcin promoter.</title>
        <authorList>
            <person name="Towler D.A."/>
            <person name="Rutledge S."/>
            <person name="Rodan G.A."/>
        </authorList>
    </citation>
    <scope>NUCLEOTIDE SEQUENCE [GENOMIC RNA]</scope>
    <source>
        <tissue>Bone</tissue>
    </source>
</reference>
<feature type="chain" id="PRO_0000049101" description="Homeobox protein MSX-2">
    <location>
        <begin position="1" status="less than"/>
        <end position="139"/>
    </location>
</feature>
<feature type="DNA-binding region" description="Homeobox" evidence="2">
    <location>
        <begin position="14"/>
        <end position="73"/>
    </location>
</feature>
<feature type="region of interest" description="Disordered" evidence="3">
    <location>
        <begin position="1"/>
        <end position="20"/>
    </location>
</feature>
<feature type="compositionally biased region" description="Basic residues" evidence="3">
    <location>
        <begin position="8"/>
        <end position="18"/>
    </location>
</feature>
<feature type="non-terminal residue">
    <location>
        <position position="1"/>
    </location>
</feature>
<organism>
    <name type="scientific">Rattus norvegicus</name>
    <name type="common">Rat</name>
    <dbReference type="NCBI Taxonomy" id="10116"/>
    <lineage>
        <taxon>Eukaryota</taxon>
        <taxon>Metazoa</taxon>
        <taxon>Chordata</taxon>
        <taxon>Craniata</taxon>
        <taxon>Vertebrata</taxon>
        <taxon>Euteleostomi</taxon>
        <taxon>Mammalia</taxon>
        <taxon>Eutheria</taxon>
        <taxon>Euarchontoglires</taxon>
        <taxon>Glires</taxon>
        <taxon>Rodentia</taxon>
        <taxon>Myomorpha</taxon>
        <taxon>Muroidea</taxon>
        <taxon>Muridae</taxon>
        <taxon>Murinae</taxon>
        <taxon>Rattus</taxon>
    </lineage>
</organism>
<name>MSX2_RAT</name>
<proteinExistence type="inferred from homology"/>
<accession>P52953</accession>
<dbReference type="EMBL" id="U12514">
    <property type="protein sequence ID" value="AAA20669.1"/>
    <property type="molecule type" value="Genomic_RNA"/>
</dbReference>
<dbReference type="SMR" id="P52953"/>
<dbReference type="CORUM" id="P52953"/>
<dbReference type="FunCoup" id="P52953">
    <property type="interactions" value="169"/>
</dbReference>
<dbReference type="STRING" id="10116.ENSRNOP00000024765"/>
<dbReference type="PhosphoSitePlus" id="P52953"/>
<dbReference type="PaxDb" id="10116-ENSRNOP00000024765"/>
<dbReference type="AGR" id="RGD:3116"/>
<dbReference type="RGD" id="3116">
    <property type="gene designation" value="Msx2"/>
</dbReference>
<dbReference type="eggNOG" id="KOG0492">
    <property type="taxonomic scope" value="Eukaryota"/>
</dbReference>
<dbReference type="InParanoid" id="P52953"/>
<dbReference type="OrthoDB" id="6159439at2759"/>
<dbReference type="PhylomeDB" id="P52953"/>
<dbReference type="Proteomes" id="UP000002494">
    <property type="component" value="Unplaced"/>
</dbReference>
<dbReference type="GO" id="GO:0005634">
    <property type="term" value="C:nucleus"/>
    <property type="evidence" value="ECO:0007669"/>
    <property type="project" value="UniProtKB-SubCell"/>
</dbReference>
<dbReference type="GO" id="GO:0005667">
    <property type="term" value="C:transcription regulator complex"/>
    <property type="evidence" value="ECO:0000266"/>
    <property type="project" value="RGD"/>
</dbReference>
<dbReference type="GO" id="GO:0003677">
    <property type="term" value="F:DNA binding"/>
    <property type="evidence" value="ECO:0000266"/>
    <property type="project" value="RGD"/>
</dbReference>
<dbReference type="GO" id="GO:0000981">
    <property type="term" value="F:DNA-binding transcription factor activity, RNA polymerase II-specific"/>
    <property type="evidence" value="ECO:0000314"/>
    <property type="project" value="RGD"/>
</dbReference>
<dbReference type="GO" id="GO:0001227">
    <property type="term" value="F:DNA-binding transcription repressor activity, RNA polymerase II-specific"/>
    <property type="evidence" value="ECO:0000266"/>
    <property type="project" value="RGD"/>
</dbReference>
<dbReference type="GO" id="GO:0000978">
    <property type="term" value="F:RNA polymerase II cis-regulatory region sequence-specific DNA binding"/>
    <property type="evidence" value="ECO:0000314"/>
    <property type="project" value="RGD"/>
</dbReference>
<dbReference type="GO" id="GO:0000977">
    <property type="term" value="F:RNA polymerase II transcription regulatory region sequence-specific DNA binding"/>
    <property type="evidence" value="ECO:0000266"/>
    <property type="project" value="RGD"/>
</dbReference>
<dbReference type="GO" id="GO:0043565">
    <property type="term" value="F:sequence-specific DNA binding"/>
    <property type="evidence" value="ECO:0000266"/>
    <property type="project" value="RGD"/>
</dbReference>
<dbReference type="GO" id="GO:1990837">
    <property type="term" value="F:sequence-specific double-stranded DNA binding"/>
    <property type="evidence" value="ECO:0000266"/>
    <property type="project" value="RGD"/>
</dbReference>
<dbReference type="GO" id="GO:0000976">
    <property type="term" value="F:transcription cis-regulatory region binding"/>
    <property type="evidence" value="ECO:0000250"/>
    <property type="project" value="UniProtKB"/>
</dbReference>
<dbReference type="GO" id="GO:0090427">
    <property type="term" value="P:activation of meiosis"/>
    <property type="evidence" value="ECO:0000266"/>
    <property type="project" value="RGD"/>
</dbReference>
<dbReference type="GO" id="GO:0009952">
    <property type="term" value="P:anterior/posterior pattern specification"/>
    <property type="evidence" value="ECO:0000266"/>
    <property type="project" value="RGD"/>
</dbReference>
<dbReference type="GO" id="GO:0030509">
    <property type="term" value="P:BMP signaling pathway"/>
    <property type="evidence" value="ECO:0000266"/>
    <property type="project" value="RGD"/>
</dbReference>
<dbReference type="GO" id="GO:0060349">
    <property type="term" value="P:bone morphogenesis"/>
    <property type="evidence" value="ECO:0000266"/>
    <property type="project" value="RGD"/>
</dbReference>
<dbReference type="GO" id="GO:0060346">
    <property type="term" value="P:bone trabecula formation"/>
    <property type="evidence" value="ECO:0000266"/>
    <property type="project" value="RGD"/>
</dbReference>
<dbReference type="GO" id="GO:0060444">
    <property type="term" value="P:branching involved in mammary gland duct morphogenesis"/>
    <property type="evidence" value="ECO:0000266"/>
    <property type="project" value="RGD"/>
</dbReference>
<dbReference type="GO" id="GO:0051216">
    <property type="term" value="P:cartilage development"/>
    <property type="evidence" value="ECO:0000315"/>
    <property type="project" value="RGD"/>
</dbReference>
<dbReference type="GO" id="GO:0061311">
    <property type="term" value="P:cell surface receptor signaling pathway involved in heart development"/>
    <property type="evidence" value="ECO:0000266"/>
    <property type="project" value="RGD"/>
</dbReference>
<dbReference type="GO" id="GO:0071392">
    <property type="term" value="P:cellular response to estradiol stimulus"/>
    <property type="evidence" value="ECO:0000266"/>
    <property type="project" value="RGD"/>
</dbReference>
<dbReference type="GO" id="GO:0071363">
    <property type="term" value="P:cellular response to growth factor stimulus"/>
    <property type="evidence" value="ECO:0000266"/>
    <property type="project" value="RGD"/>
</dbReference>
<dbReference type="GO" id="GO:0002063">
    <property type="term" value="P:chondrocyte development"/>
    <property type="evidence" value="ECO:0000266"/>
    <property type="project" value="RGD"/>
</dbReference>
<dbReference type="GO" id="GO:0042733">
    <property type="term" value="P:embryonic digit morphogenesis"/>
    <property type="evidence" value="ECO:0000266"/>
    <property type="project" value="RGD"/>
</dbReference>
<dbReference type="GO" id="GO:0035115">
    <property type="term" value="P:embryonic forelimb morphogenesis"/>
    <property type="evidence" value="ECO:0000266"/>
    <property type="project" value="RGD"/>
</dbReference>
<dbReference type="GO" id="GO:0035116">
    <property type="term" value="P:embryonic hindlimb morphogenesis"/>
    <property type="evidence" value="ECO:0000266"/>
    <property type="project" value="RGD"/>
</dbReference>
<dbReference type="GO" id="GO:0030326">
    <property type="term" value="P:embryonic limb morphogenesis"/>
    <property type="evidence" value="ECO:0000266"/>
    <property type="project" value="RGD"/>
</dbReference>
<dbReference type="GO" id="GO:0035880">
    <property type="term" value="P:embryonic nail plate morphogenesis"/>
    <property type="evidence" value="ECO:0000266"/>
    <property type="project" value="RGD"/>
</dbReference>
<dbReference type="GO" id="GO:0070166">
    <property type="term" value="P:enamel mineralization"/>
    <property type="evidence" value="ECO:0000266"/>
    <property type="project" value="RGD"/>
</dbReference>
<dbReference type="GO" id="GO:0003416">
    <property type="term" value="P:endochondral bone growth"/>
    <property type="evidence" value="ECO:0000266"/>
    <property type="project" value="RGD"/>
</dbReference>
<dbReference type="GO" id="GO:0003198">
    <property type="term" value="P:epithelial to mesenchymal transition involved in endocardial cushion formation"/>
    <property type="evidence" value="ECO:0000266"/>
    <property type="project" value="RGD"/>
</dbReference>
<dbReference type="GO" id="GO:0060364">
    <property type="term" value="P:frontal suture morphogenesis"/>
    <property type="evidence" value="ECO:0000266"/>
    <property type="project" value="RGD"/>
</dbReference>
<dbReference type="GO" id="GO:0061180">
    <property type="term" value="P:mammary gland epithelium development"/>
    <property type="evidence" value="ECO:0000266"/>
    <property type="project" value="RGD"/>
</dbReference>
<dbReference type="GO" id="GO:0097152">
    <property type="term" value="P:mesenchymal cell apoptotic process"/>
    <property type="evidence" value="ECO:0000266"/>
    <property type="project" value="RGD"/>
</dbReference>
<dbReference type="GO" id="GO:0043066">
    <property type="term" value="P:negative regulation of apoptotic process"/>
    <property type="evidence" value="ECO:0000266"/>
    <property type="project" value="RGD"/>
</dbReference>
<dbReference type="GO" id="GO:0008285">
    <property type="term" value="P:negative regulation of cell population proliferation"/>
    <property type="evidence" value="ECO:0000266"/>
    <property type="project" value="RGD"/>
</dbReference>
<dbReference type="GO" id="GO:0045892">
    <property type="term" value="P:negative regulation of DNA-templated transcription"/>
    <property type="evidence" value="ECO:0000250"/>
    <property type="project" value="UniProtKB"/>
</dbReference>
<dbReference type="GO" id="GO:0045599">
    <property type="term" value="P:negative regulation of fat cell differentiation"/>
    <property type="evidence" value="ECO:0000266"/>
    <property type="project" value="RGD"/>
</dbReference>
<dbReference type="GO" id="GO:0045617">
    <property type="term" value="P:negative regulation of keratinocyte differentiation"/>
    <property type="evidence" value="ECO:0000266"/>
    <property type="project" value="RGD"/>
</dbReference>
<dbReference type="GO" id="GO:0000122">
    <property type="term" value="P:negative regulation of transcription by RNA polymerase II"/>
    <property type="evidence" value="ECO:0000250"/>
    <property type="project" value="UniProtKB"/>
</dbReference>
<dbReference type="GO" id="GO:0042476">
    <property type="term" value="P:odontogenesis"/>
    <property type="evidence" value="ECO:0000266"/>
    <property type="project" value="RGD"/>
</dbReference>
<dbReference type="GO" id="GO:0001503">
    <property type="term" value="P:ossification"/>
    <property type="evidence" value="ECO:0000266"/>
    <property type="project" value="RGD"/>
</dbReference>
<dbReference type="GO" id="GO:0002076">
    <property type="term" value="P:osteoblast development"/>
    <property type="evidence" value="ECO:0000270"/>
    <property type="project" value="RGD"/>
</dbReference>
<dbReference type="GO" id="GO:0001649">
    <property type="term" value="P:osteoblast differentiation"/>
    <property type="evidence" value="ECO:0000250"/>
    <property type="project" value="UniProtKB"/>
</dbReference>
<dbReference type="GO" id="GO:0003151">
    <property type="term" value="P:outflow tract morphogenesis"/>
    <property type="evidence" value="ECO:0000266"/>
    <property type="project" value="RGD"/>
</dbReference>
<dbReference type="GO" id="GO:0003148">
    <property type="term" value="P:outflow tract septum morphogenesis"/>
    <property type="evidence" value="ECO:0000266"/>
    <property type="project" value="RGD"/>
</dbReference>
<dbReference type="GO" id="GO:0043065">
    <property type="term" value="P:positive regulation of apoptotic process"/>
    <property type="evidence" value="ECO:0000315"/>
    <property type="project" value="RGD"/>
</dbReference>
<dbReference type="GO" id="GO:0030513">
    <property type="term" value="P:positive regulation of BMP signaling pathway"/>
    <property type="evidence" value="ECO:0000266"/>
    <property type="project" value="RGD"/>
</dbReference>
<dbReference type="GO" id="GO:2001055">
    <property type="term" value="P:positive regulation of mesenchymal cell apoptotic process"/>
    <property type="evidence" value="ECO:0000266"/>
    <property type="project" value="RGD"/>
</dbReference>
<dbReference type="GO" id="GO:0045669">
    <property type="term" value="P:positive regulation of osteoblast differentiation"/>
    <property type="evidence" value="ECO:0000266"/>
    <property type="project" value="RGD"/>
</dbReference>
<dbReference type="GO" id="GO:0051795">
    <property type="term" value="P:positive regulation of timing of catagen"/>
    <property type="evidence" value="ECO:0000266"/>
    <property type="project" value="RGD"/>
</dbReference>
<dbReference type="GO" id="GO:0042981">
    <property type="term" value="P:regulation of apoptotic process"/>
    <property type="evidence" value="ECO:0000266"/>
    <property type="project" value="RGD"/>
</dbReference>
<dbReference type="GO" id="GO:0023019">
    <property type="term" value="P:signal transduction involved in regulation of gene expression"/>
    <property type="evidence" value="ECO:0000266"/>
    <property type="project" value="RGD"/>
</dbReference>
<dbReference type="GO" id="GO:0048863">
    <property type="term" value="P:stem cell differentiation"/>
    <property type="evidence" value="ECO:0000266"/>
    <property type="project" value="RGD"/>
</dbReference>
<dbReference type="GO" id="GO:0006366">
    <property type="term" value="P:transcription by RNA polymerase II"/>
    <property type="evidence" value="ECO:0000314"/>
    <property type="project" value="RGD"/>
</dbReference>
<dbReference type="GO" id="GO:0042060">
    <property type="term" value="P:wound healing"/>
    <property type="evidence" value="ECO:0000266"/>
    <property type="project" value="RGD"/>
</dbReference>
<dbReference type="GO" id="GO:0035313">
    <property type="term" value="P:wound healing, spreading of epidermal cells"/>
    <property type="evidence" value="ECO:0000266"/>
    <property type="project" value="RGD"/>
</dbReference>
<dbReference type="CDD" id="cd00086">
    <property type="entry name" value="homeodomain"/>
    <property type="match status" value="1"/>
</dbReference>
<dbReference type="FunFam" id="1.10.10.60:FF:000271">
    <property type="entry name" value="Homeobox protein MSX-2"/>
    <property type="match status" value="1"/>
</dbReference>
<dbReference type="Gene3D" id="1.10.10.60">
    <property type="entry name" value="Homeodomain-like"/>
    <property type="match status" value="1"/>
</dbReference>
<dbReference type="InterPro" id="IPR001356">
    <property type="entry name" value="HD"/>
</dbReference>
<dbReference type="InterPro" id="IPR020479">
    <property type="entry name" value="HD_metazoa"/>
</dbReference>
<dbReference type="InterPro" id="IPR017970">
    <property type="entry name" value="Homeobox_CS"/>
</dbReference>
<dbReference type="InterPro" id="IPR009057">
    <property type="entry name" value="Homeodomain-like_sf"/>
</dbReference>
<dbReference type="InterPro" id="IPR000047">
    <property type="entry name" value="HTH_motif"/>
</dbReference>
<dbReference type="InterPro" id="IPR050674">
    <property type="entry name" value="Msh_Homeobox_Regulators"/>
</dbReference>
<dbReference type="PANTHER" id="PTHR24338">
    <property type="entry name" value="HOMEOBOX PROTEIN MSX"/>
    <property type="match status" value="1"/>
</dbReference>
<dbReference type="PANTHER" id="PTHR24338:SF10">
    <property type="entry name" value="HOMEOBOX PROTEIN MSX-2"/>
    <property type="match status" value="1"/>
</dbReference>
<dbReference type="Pfam" id="PF00046">
    <property type="entry name" value="Homeodomain"/>
    <property type="match status" value="1"/>
</dbReference>
<dbReference type="PRINTS" id="PR00024">
    <property type="entry name" value="HOMEOBOX"/>
</dbReference>
<dbReference type="PRINTS" id="PR00031">
    <property type="entry name" value="HTHREPRESSR"/>
</dbReference>
<dbReference type="SMART" id="SM00389">
    <property type="entry name" value="HOX"/>
    <property type="match status" value="1"/>
</dbReference>
<dbReference type="SUPFAM" id="SSF46689">
    <property type="entry name" value="Homeodomain-like"/>
    <property type="match status" value="1"/>
</dbReference>
<dbReference type="PROSITE" id="PS00027">
    <property type="entry name" value="HOMEOBOX_1"/>
    <property type="match status" value="1"/>
</dbReference>
<dbReference type="PROSITE" id="PS50071">
    <property type="entry name" value="HOMEOBOX_2"/>
    <property type="match status" value="1"/>
</dbReference>
<protein>
    <recommendedName>
        <fullName>Homeobox protein MSX-2</fullName>
    </recommendedName>
    <alternativeName>
        <fullName>Homeobox protein Hox-8-1</fullName>
    </alternativeName>
</protein>
<comment type="function">
    <text evidence="1">Acts as a transcriptional regulator in bone development. Represses the ALPL promoter activity and antagonizes the stimulatory effect of DLX5 on ALPL expression during osteoblast differentiation. Probable morphogenetic role. May play a role in limb-pattern formation. In osteoblasts, suppresses transcription driven by the osteocalcin FGF response element (OCFRE). Binds to the homeodomain-response element of the ALPL promoter (By similarity).</text>
</comment>
<comment type="subunit">
    <text evidence="1">Interacts with MINT, with XRCC6 (Ku70) and XRCC5 (Ku80).</text>
</comment>
<comment type="subcellular location">
    <subcellularLocation>
        <location>Nucleus</location>
    </subcellularLocation>
</comment>
<comment type="similarity">
    <text evidence="4">Belongs to the Msh homeobox family.</text>
</comment>
<evidence type="ECO:0000250" key="1"/>
<evidence type="ECO:0000255" key="2">
    <source>
        <dbReference type="PROSITE-ProRule" id="PRU00108"/>
    </source>
</evidence>
<evidence type="ECO:0000256" key="3">
    <source>
        <dbReference type="SAM" id="MobiDB-lite"/>
    </source>
</evidence>
<evidence type="ECO:0000305" key="4"/>
<keyword id="KW-0217">Developmental protein</keyword>
<keyword id="KW-0238">DNA-binding</keyword>
<keyword id="KW-0371">Homeobox</keyword>
<keyword id="KW-0539">Nucleus</keyword>
<keyword id="KW-0892">Osteogenesis</keyword>
<keyword id="KW-1185">Reference proteome</keyword>
<keyword id="KW-0678">Repressor</keyword>
<keyword id="KW-0804">Transcription</keyword>
<keyword id="KW-0805">Transcription regulation</keyword>
<gene>
    <name type="primary">Msx2</name>
    <name type="synonym">Msx-2</name>
</gene>